<feature type="chain" id="PRO_1000060247" description="Thiazole synthase">
    <location>
        <begin position="1"/>
        <end position="259"/>
    </location>
</feature>
<feature type="active site" description="Schiff-base intermediate with DXP" evidence="1">
    <location>
        <position position="99"/>
    </location>
</feature>
<feature type="binding site" evidence="1">
    <location>
        <position position="161"/>
    </location>
    <ligand>
        <name>1-deoxy-D-xylulose 5-phosphate</name>
        <dbReference type="ChEBI" id="CHEBI:57792"/>
    </ligand>
</feature>
<feature type="binding site" evidence="1">
    <location>
        <begin position="187"/>
        <end position="188"/>
    </location>
    <ligand>
        <name>1-deoxy-D-xylulose 5-phosphate</name>
        <dbReference type="ChEBI" id="CHEBI:57792"/>
    </ligand>
</feature>
<feature type="binding site" evidence="1">
    <location>
        <begin position="209"/>
        <end position="219"/>
    </location>
    <ligand>
        <name>1-deoxy-D-xylulose 5-phosphate</name>
        <dbReference type="ChEBI" id="CHEBI:57792"/>
    </ligand>
</feature>
<reference key="1">
    <citation type="journal article" date="2007" name="PLoS ONE">
        <title>The complete genome sequence and analysis of the Epsilonproteobacterium Arcobacter butzleri.</title>
        <authorList>
            <person name="Miller W.G."/>
            <person name="Parker C.T."/>
            <person name="Rubenfield M."/>
            <person name="Mendz G.L."/>
            <person name="Woesten M.M.S.M."/>
            <person name="Ussery D.W."/>
            <person name="Stolz J.F."/>
            <person name="Binnewies T.T."/>
            <person name="Hallin P.F."/>
            <person name="Wang G."/>
            <person name="Malek J.A."/>
            <person name="Rogosin A."/>
            <person name="Stanker L.H."/>
            <person name="Mandrell R.E."/>
        </authorList>
    </citation>
    <scope>NUCLEOTIDE SEQUENCE [LARGE SCALE GENOMIC DNA]</scope>
    <source>
        <strain>RM4018</strain>
    </source>
</reference>
<evidence type="ECO:0000255" key="1">
    <source>
        <dbReference type="HAMAP-Rule" id="MF_00443"/>
    </source>
</evidence>
<keyword id="KW-0963">Cytoplasm</keyword>
<keyword id="KW-1185">Reference proteome</keyword>
<keyword id="KW-0704">Schiff base</keyword>
<keyword id="KW-0784">Thiamine biosynthesis</keyword>
<keyword id="KW-0808">Transferase</keyword>
<dbReference type="EC" id="2.8.1.10" evidence="1"/>
<dbReference type="EMBL" id="CP000361">
    <property type="protein sequence ID" value="ABV66452.1"/>
    <property type="molecule type" value="Genomic_DNA"/>
</dbReference>
<dbReference type="RefSeq" id="WP_012012055.1">
    <property type="nucleotide sequence ID" value="NC_009850.1"/>
</dbReference>
<dbReference type="SMR" id="A8ER78"/>
<dbReference type="STRING" id="367737.Abu_0168"/>
<dbReference type="GeneID" id="24303381"/>
<dbReference type="KEGG" id="abu:Abu_0168"/>
<dbReference type="eggNOG" id="COG2022">
    <property type="taxonomic scope" value="Bacteria"/>
</dbReference>
<dbReference type="HOGENOM" id="CLU_062233_1_0_7"/>
<dbReference type="UniPathway" id="UPA00060"/>
<dbReference type="Proteomes" id="UP000001136">
    <property type="component" value="Chromosome"/>
</dbReference>
<dbReference type="GO" id="GO:0005737">
    <property type="term" value="C:cytoplasm"/>
    <property type="evidence" value="ECO:0007669"/>
    <property type="project" value="UniProtKB-SubCell"/>
</dbReference>
<dbReference type="GO" id="GO:1990107">
    <property type="term" value="F:thiazole synthase activity"/>
    <property type="evidence" value="ECO:0007669"/>
    <property type="project" value="UniProtKB-EC"/>
</dbReference>
<dbReference type="GO" id="GO:0009229">
    <property type="term" value="P:thiamine diphosphate biosynthetic process"/>
    <property type="evidence" value="ECO:0007669"/>
    <property type="project" value="UniProtKB-UniRule"/>
</dbReference>
<dbReference type="CDD" id="cd04728">
    <property type="entry name" value="ThiG"/>
    <property type="match status" value="1"/>
</dbReference>
<dbReference type="Gene3D" id="3.20.20.70">
    <property type="entry name" value="Aldolase class I"/>
    <property type="match status" value="1"/>
</dbReference>
<dbReference type="HAMAP" id="MF_00443">
    <property type="entry name" value="ThiG"/>
    <property type="match status" value="1"/>
</dbReference>
<dbReference type="InterPro" id="IPR013785">
    <property type="entry name" value="Aldolase_TIM"/>
</dbReference>
<dbReference type="InterPro" id="IPR033983">
    <property type="entry name" value="Thiazole_synthase_ThiG"/>
</dbReference>
<dbReference type="InterPro" id="IPR008867">
    <property type="entry name" value="ThiG"/>
</dbReference>
<dbReference type="PANTHER" id="PTHR34266">
    <property type="entry name" value="THIAZOLE SYNTHASE"/>
    <property type="match status" value="1"/>
</dbReference>
<dbReference type="PANTHER" id="PTHR34266:SF2">
    <property type="entry name" value="THIAZOLE SYNTHASE"/>
    <property type="match status" value="1"/>
</dbReference>
<dbReference type="Pfam" id="PF05690">
    <property type="entry name" value="ThiG"/>
    <property type="match status" value="1"/>
</dbReference>
<dbReference type="SUPFAM" id="SSF110399">
    <property type="entry name" value="ThiG-like"/>
    <property type="match status" value="1"/>
</dbReference>
<protein>
    <recommendedName>
        <fullName evidence="1">Thiazole synthase</fullName>
        <ecNumber evidence="1">2.8.1.10</ecNumber>
    </recommendedName>
</protein>
<comment type="function">
    <text evidence="1">Catalyzes the rearrangement of 1-deoxy-D-xylulose 5-phosphate (DXP) to produce the thiazole phosphate moiety of thiamine. Sulfur is provided by the thiocarboxylate moiety of the carrier protein ThiS. In vitro, sulfur can be provided by H(2)S.</text>
</comment>
<comment type="catalytic activity">
    <reaction evidence="1">
        <text>[ThiS sulfur-carrier protein]-C-terminal-Gly-aminoethanethioate + 2-iminoacetate + 1-deoxy-D-xylulose 5-phosphate = [ThiS sulfur-carrier protein]-C-terminal Gly-Gly + 2-[(2R,5Z)-2-carboxy-4-methylthiazol-5(2H)-ylidene]ethyl phosphate + 2 H2O + H(+)</text>
        <dbReference type="Rhea" id="RHEA:26297"/>
        <dbReference type="Rhea" id="RHEA-COMP:12909"/>
        <dbReference type="Rhea" id="RHEA-COMP:19908"/>
        <dbReference type="ChEBI" id="CHEBI:15377"/>
        <dbReference type="ChEBI" id="CHEBI:15378"/>
        <dbReference type="ChEBI" id="CHEBI:57792"/>
        <dbReference type="ChEBI" id="CHEBI:62899"/>
        <dbReference type="ChEBI" id="CHEBI:77846"/>
        <dbReference type="ChEBI" id="CHEBI:90778"/>
        <dbReference type="ChEBI" id="CHEBI:232372"/>
        <dbReference type="EC" id="2.8.1.10"/>
    </reaction>
</comment>
<comment type="pathway">
    <text evidence="1">Cofactor biosynthesis; thiamine diphosphate biosynthesis.</text>
</comment>
<comment type="subunit">
    <text evidence="1">Homotetramer. Forms heterodimers with either ThiH or ThiS.</text>
</comment>
<comment type="subcellular location">
    <subcellularLocation>
        <location evidence="1">Cytoplasm</location>
    </subcellularLocation>
</comment>
<comment type="similarity">
    <text evidence="1">Belongs to the ThiG family.</text>
</comment>
<organism>
    <name type="scientific">Aliarcobacter butzleri (strain RM4018)</name>
    <name type="common">Arcobacter butzleri</name>
    <dbReference type="NCBI Taxonomy" id="367737"/>
    <lineage>
        <taxon>Bacteria</taxon>
        <taxon>Pseudomonadati</taxon>
        <taxon>Campylobacterota</taxon>
        <taxon>Epsilonproteobacteria</taxon>
        <taxon>Campylobacterales</taxon>
        <taxon>Arcobacteraceae</taxon>
        <taxon>Aliarcobacter</taxon>
    </lineage>
</organism>
<name>THIG_ALIB4</name>
<sequence>MNDILKIGKYELNSRLIVGSGKYKDFQTTKEATLASGSELITVAIRRVNITNPNEENLLDYFKDTNVKFLPNSAGCFTAEEAITTFRLMREATGIDLIKLEVIGDAQKTLYPDVIETIKACEILKKDGFTIMAYTSDDPIIAKRLEDAGADAIMPLAAPIGSGLGIQNKYNIAFIRDAVKVPVIVDAGIGCASDASIAMELGADAVLANSAIACAQNPIQMAEAMKYAVIAGRLGYKAGRIPKKPYATASSPIDGLIQF</sequence>
<gene>
    <name evidence="1" type="primary">thiG</name>
    <name type="ordered locus">Abu_0168</name>
</gene>
<accession>A8ER78</accession>
<proteinExistence type="inferred from homology"/>